<dbReference type="EMBL" id="CP000804">
    <property type="protein sequence ID" value="ABU57621.1"/>
    <property type="molecule type" value="Genomic_DNA"/>
</dbReference>
<dbReference type="RefSeq" id="WP_012120049.1">
    <property type="nucleotide sequence ID" value="NC_009767.1"/>
</dbReference>
<dbReference type="SMR" id="A7NJF1"/>
<dbReference type="STRING" id="383372.Rcas_1528"/>
<dbReference type="KEGG" id="rca:Rcas_1528"/>
<dbReference type="eggNOG" id="COG0238">
    <property type="taxonomic scope" value="Bacteria"/>
</dbReference>
<dbReference type="HOGENOM" id="CLU_148710_0_3_0"/>
<dbReference type="OrthoDB" id="9812008at2"/>
<dbReference type="Proteomes" id="UP000000263">
    <property type="component" value="Chromosome"/>
</dbReference>
<dbReference type="GO" id="GO:0022627">
    <property type="term" value="C:cytosolic small ribosomal subunit"/>
    <property type="evidence" value="ECO:0007669"/>
    <property type="project" value="TreeGrafter"/>
</dbReference>
<dbReference type="GO" id="GO:0070181">
    <property type="term" value="F:small ribosomal subunit rRNA binding"/>
    <property type="evidence" value="ECO:0007669"/>
    <property type="project" value="TreeGrafter"/>
</dbReference>
<dbReference type="GO" id="GO:0003735">
    <property type="term" value="F:structural constituent of ribosome"/>
    <property type="evidence" value="ECO:0007669"/>
    <property type="project" value="InterPro"/>
</dbReference>
<dbReference type="GO" id="GO:0006412">
    <property type="term" value="P:translation"/>
    <property type="evidence" value="ECO:0007669"/>
    <property type="project" value="UniProtKB-UniRule"/>
</dbReference>
<dbReference type="Gene3D" id="4.10.640.10">
    <property type="entry name" value="Ribosomal protein S18"/>
    <property type="match status" value="1"/>
</dbReference>
<dbReference type="HAMAP" id="MF_00270">
    <property type="entry name" value="Ribosomal_bS18"/>
    <property type="match status" value="1"/>
</dbReference>
<dbReference type="InterPro" id="IPR001648">
    <property type="entry name" value="Ribosomal_bS18"/>
</dbReference>
<dbReference type="InterPro" id="IPR036870">
    <property type="entry name" value="Ribosomal_bS18_sf"/>
</dbReference>
<dbReference type="NCBIfam" id="TIGR00165">
    <property type="entry name" value="S18"/>
    <property type="match status" value="1"/>
</dbReference>
<dbReference type="PANTHER" id="PTHR13479">
    <property type="entry name" value="30S RIBOSOMAL PROTEIN S18"/>
    <property type="match status" value="1"/>
</dbReference>
<dbReference type="PANTHER" id="PTHR13479:SF40">
    <property type="entry name" value="SMALL RIBOSOMAL SUBUNIT PROTEIN BS18M"/>
    <property type="match status" value="1"/>
</dbReference>
<dbReference type="Pfam" id="PF01084">
    <property type="entry name" value="Ribosomal_S18"/>
    <property type="match status" value="1"/>
</dbReference>
<dbReference type="PRINTS" id="PR00974">
    <property type="entry name" value="RIBOSOMALS18"/>
</dbReference>
<dbReference type="SUPFAM" id="SSF46911">
    <property type="entry name" value="Ribosomal protein S18"/>
    <property type="match status" value="1"/>
</dbReference>
<accession>A7NJF1</accession>
<sequence>MTDDQTRRSAGASRRRFGARRKVCAFCADKIRVVDYKDVKRLQRCMSERGKILPRRRTGVCARHQRSLTVAIKRARHMALLPFVAAHMHS</sequence>
<evidence type="ECO:0000255" key="1">
    <source>
        <dbReference type="HAMAP-Rule" id="MF_00270"/>
    </source>
</evidence>
<evidence type="ECO:0000305" key="2"/>
<reference key="1">
    <citation type="submission" date="2007-08" db="EMBL/GenBank/DDBJ databases">
        <title>Complete sequence of Roseiflexus castenholzii DSM 13941.</title>
        <authorList>
            <consortium name="US DOE Joint Genome Institute"/>
            <person name="Copeland A."/>
            <person name="Lucas S."/>
            <person name="Lapidus A."/>
            <person name="Barry K."/>
            <person name="Glavina del Rio T."/>
            <person name="Dalin E."/>
            <person name="Tice H."/>
            <person name="Pitluck S."/>
            <person name="Thompson L.S."/>
            <person name="Brettin T."/>
            <person name="Bruce D."/>
            <person name="Detter J.C."/>
            <person name="Han C."/>
            <person name="Tapia R."/>
            <person name="Schmutz J."/>
            <person name="Larimer F."/>
            <person name="Land M."/>
            <person name="Hauser L."/>
            <person name="Kyrpides N."/>
            <person name="Mikhailova N."/>
            <person name="Bryant D.A."/>
            <person name="Hanada S."/>
            <person name="Tsukatani Y."/>
            <person name="Richardson P."/>
        </authorList>
    </citation>
    <scope>NUCLEOTIDE SEQUENCE [LARGE SCALE GENOMIC DNA]</scope>
    <source>
        <strain>DSM 13941 / HLO8</strain>
    </source>
</reference>
<feature type="chain" id="PRO_0000345536" description="Small ribosomal subunit protein bS18A">
    <location>
        <begin position="1"/>
        <end position="90"/>
    </location>
</feature>
<comment type="function">
    <text evidence="1">Binds as a heterodimer with protein bS6 to the central domain of the 16S rRNA, where it helps stabilize the platform of the 30S subunit.</text>
</comment>
<comment type="subunit">
    <text evidence="1">Part of the 30S ribosomal subunit. Forms a tight heterodimer with protein bS6.</text>
</comment>
<comment type="similarity">
    <text evidence="1">Belongs to the bacterial ribosomal protein bS18 family.</text>
</comment>
<keyword id="KW-1185">Reference proteome</keyword>
<keyword id="KW-0687">Ribonucleoprotein</keyword>
<keyword id="KW-0689">Ribosomal protein</keyword>
<keyword id="KW-0694">RNA-binding</keyword>
<keyword id="KW-0699">rRNA-binding</keyword>
<protein>
    <recommendedName>
        <fullName evidence="1">Small ribosomal subunit protein bS18A</fullName>
    </recommendedName>
    <alternativeName>
        <fullName evidence="2">30S ribosomal protein S18 1</fullName>
    </alternativeName>
</protein>
<organism>
    <name type="scientific">Roseiflexus castenholzii (strain DSM 13941 / HLO8)</name>
    <dbReference type="NCBI Taxonomy" id="383372"/>
    <lineage>
        <taxon>Bacteria</taxon>
        <taxon>Bacillati</taxon>
        <taxon>Chloroflexota</taxon>
        <taxon>Chloroflexia</taxon>
        <taxon>Chloroflexales</taxon>
        <taxon>Roseiflexineae</taxon>
        <taxon>Roseiflexaceae</taxon>
        <taxon>Roseiflexus</taxon>
    </lineage>
</organism>
<name>RS181_ROSCS</name>
<proteinExistence type="inferred from homology"/>
<gene>
    <name evidence="1" type="primary">rpsR1</name>
    <name type="ordered locus">Rcas_1528</name>
</gene>